<gene>
    <name evidence="1" type="primary">panC</name>
    <name type="ordered locus">CC_2166</name>
</gene>
<keyword id="KW-0067">ATP-binding</keyword>
<keyword id="KW-0963">Cytoplasm</keyword>
<keyword id="KW-0436">Ligase</keyword>
<keyword id="KW-0547">Nucleotide-binding</keyword>
<keyword id="KW-0566">Pantothenate biosynthesis</keyword>
<keyword id="KW-1185">Reference proteome</keyword>
<feature type="chain" id="PRO_0000128218" description="Pantothenate synthetase">
    <location>
        <begin position="1"/>
        <end position="285"/>
    </location>
</feature>
<feature type="active site" description="Proton donor" evidence="1">
    <location>
        <position position="40"/>
    </location>
</feature>
<feature type="binding site" evidence="1">
    <location>
        <begin position="33"/>
        <end position="40"/>
    </location>
    <ligand>
        <name>ATP</name>
        <dbReference type="ChEBI" id="CHEBI:30616"/>
    </ligand>
</feature>
<feature type="binding site" evidence="1">
    <location>
        <position position="64"/>
    </location>
    <ligand>
        <name>(R)-pantoate</name>
        <dbReference type="ChEBI" id="CHEBI:15980"/>
    </ligand>
</feature>
<feature type="binding site" evidence="1">
    <location>
        <position position="64"/>
    </location>
    <ligand>
        <name>beta-alanine</name>
        <dbReference type="ChEBI" id="CHEBI:57966"/>
    </ligand>
</feature>
<feature type="binding site" evidence="1">
    <location>
        <begin position="150"/>
        <end position="153"/>
    </location>
    <ligand>
        <name>ATP</name>
        <dbReference type="ChEBI" id="CHEBI:30616"/>
    </ligand>
</feature>
<feature type="binding site" evidence="1">
    <location>
        <position position="156"/>
    </location>
    <ligand>
        <name>(R)-pantoate</name>
        <dbReference type="ChEBI" id="CHEBI:15980"/>
    </ligand>
</feature>
<feature type="binding site" evidence="1">
    <location>
        <position position="179"/>
    </location>
    <ligand>
        <name>ATP</name>
        <dbReference type="ChEBI" id="CHEBI:30616"/>
    </ligand>
</feature>
<feature type="binding site" evidence="1">
    <location>
        <begin position="187"/>
        <end position="190"/>
    </location>
    <ligand>
        <name>ATP</name>
        <dbReference type="ChEBI" id="CHEBI:30616"/>
    </ligand>
</feature>
<proteinExistence type="inferred from homology"/>
<protein>
    <recommendedName>
        <fullName evidence="1">Pantothenate synthetase</fullName>
        <shortName evidence="1">PS</shortName>
        <ecNumber evidence="1">6.3.2.1</ecNumber>
    </recommendedName>
    <alternativeName>
        <fullName evidence="1">Pantoate--beta-alanine ligase</fullName>
    </alternativeName>
    <alternativeName>
        <fullName evidence="1">Pantoate-activating enzyme</fullName>
    </alternativeName>
</protein>
<dbReference type="EC" id="6.3.2.1" evidence="1"/>
<dbReference type="EMBL" id="AE005673">
    <property type="protein sequence ID" value="AAK24137.1"/>
    <property type="molecule type" value="Genomic_DNA"/>
</dbReference>
<dbReference type="PIR" id="E87517">
    <property type="entry name" value="E87517"/>
</dbReference>
<dbReference type="RefSeq" id="NP_420969.1">
    <property type="nucleotide sequence ID" value="NC_002696.2"/>
</dbReference>
<dbReference type="RefSeq" id="WP_010920027.1">
    <property type="nucleotide sequence ID" value="NC_002696.2"/>
</dbReference>
<dbReference type="SMR" id="Q9A6C8"/>
<dbReference type="STRING" id="190650.CC_2166"/>
<dbReference type="EnsemblBacteria" id="AAK24137">
    <property type="protein sequence ID" value="AAK24137"/>
    <property type="gene ID" value="CC_2166"/>
</dbReference>
<dbReference type="KEGG" id="ccr:CC_2166"/>
<dbReference type="PATRIC" id="fig|190650.5.peg.2184"/>
<dbReference type="eggNOG" id="COG0414">
    <property type="taxonomic scope" value="Bacteria"/>
</dbReference>
<dbReference type="HOGENOM" id="CLU_047148_0_2_5"/>
<dbReference type="BioCyc" id="CAULO:CC2166-MONOMER"/>
<dbReference type="UniPathway" id="UPA00028">
    <property type="reaction ID" value="UER00005"/>
</dbReference>
<dbReference type="Proteomes" id="UP000001816">
    <property type="component" value="Chromosome"/>
</dbReference>
<dbReference type="GO" id="GO:0005829">
    <property type="term" value="C:cytosol"/>
    <property type="evidence" value="ECO:0007669"/>
    <property type="project" value="TreeGrafter"/>
</dbReference>
<dbReference type="GO" id="GO:0005524">
    <property type="term" value="F:ATP binding"/>
    <property type="evidence" value="ECO:0007669"/>
    <property type="project" value="UniProtKB-KW"/>
</dbReference>
<dbReference type="GO" id="GO:0004592">
    <property type="term" value="F:pantoate-beta-alanine ligase activity"/>
    <property type="evidence" value="ECO:0007669"/>
    <property type="project" value="UniProtKB-UniRule"/>
</dbReference>
<dbReference type="GO" id="GO:0015940">
    <property type="term" value="P:pantothenate biosynthetic process"/>
    <property type="evidence" value="ECO:0007669"/>
    <property type="project" value="UniProtKB-UniRule"/>
</dbReference>
<dbReference type="CDD" id="cd00560">
    <property type="entry name" value="PanC"/>
    <property type="match status" value="1"/>
</dbReference>
<dbReference type="Gene3D" id="3.40.50.620">
    <property type="entry name" value="HUPs"/>
    <property type="match status" value="1"/>
</dbReference>
<dbReference type="Gene3D" id="3.30.1300.10">
    <property type="entry name" value="Pantoate-beta-alanine ligase, C-terminal domain"/>
    <property type="match status" value="1"/>
</dbReference>
<dbReference type="HAMAP" id="MF_00158">
    <property type="entry name" value="PanC"/>
    <property type="match status" value="1"/>
</dbReference>
<dbReference type="InterPro" id="IPR004821">
    <property type="entry name" value="Cyt_trans-like"/>
</dbReference>
<dbReference type="InterPro" id="IPR003721">
    <property type="entry name" value="Pantoate_ligase"/>
</dbReference>
<dbReference type="InterPro" id="IPR042176">
    <property type="entry name" value="Pantoate_ligase_C"/>
</dbReference>
<dbReference type="InterPro" id="IPR014729">
    <property type="entry name" value="Rossmann-like_a/b/a_fold"/>
</dbReference>
<dbReference type="NCBIfam" id="TIGR00125">
    <property type="entry name" value="cyt_tran_rel"/>
    <property type="match status" value="1"/>
</dbReference>
<dbReference type="NCBIfam" id="TIGR00018">
    <property type="entry name" value="panC"/>
    <property type="match status" value="1"/>
</dbReference>
<dbReference type="PANTHER" id="PTHR21299">
    <property type="entry name" value="CYTIDYLATE KINASE/PANTOATE-BETA-ALANINE LIGASE"/>
    <property type="match status" value="1"/>
</dbReference>
<dbReference type="PANTHER" id="PTHR21299:SF1">
    <property type="entry name" value="PANTOATE--BETA-ALANINE LIGASE"/>
    <property type="match status" value="1"/>
</dbReference>
<dbReference type="Pfam" id="PF02569">
    <property type="entry name" value="Pantoate_ligase"/>
    <property type="match status" value="1"/>
</dbReference>
<dbReference type="SUPFAM" id="SSF52374">
    <property type="entry name" value="Nucleotidylyl transferase"/>
    <property type="match status" value="1"/>
</dbReference>
<organism>
    <name type="scientific">Caulobacter vibrioides (strain ATCC 19089 / CIP 103742 / CB 15)</name>
    <name type="common">Caulobacter crescentus</name>
    <dbReference type="NCBI Taxonomy" id="190650"/>
    <lineage>
        <taxon>Bacteria</taxon>
        <taxon>Pseudomonadati</taxon>
        <taxon>Pseudomonadota</taxon>
        <taxon>Alphaproteobacteria</taxon>
        <taxon>Caulobacterales</taxon>
        <taxon>Caulobacteraceae</taxon>
        <taxon>Caulobacter</taxon>
    </lineage>
</organism>
<accession>Q9A6C8</accession>
<reference key="1">
    <citation type="journal article" date="2001" name="Proc. Natl. Acad. Sci. U.S.A.">
        <title>Complete genome sequence of Caulobacter crescentus.</title>
        <authorList>
            <person name="Nierman W.C."/>
            <person name="Feldblyum T.V."/>
            <person name="Laub M.T."/>
            <person name="Paulsen I.T."/>
            <person name="Nelson K.E."/>
            <person name="Eisen J.A."/>
            <person name="Heidelberg J.F."/>
            <person name="Alley M.R.K."/>
            <person name="Ohta N."/>
            <person name="Maddock J.R."/>
            <person name="Potocka I."/>
            <person name="Nelson W.C."/>
            <person name="Newton A."/>
            <person name="Stephens C."/>
            <person name="Phadke N.D."/>
            <person name="Ely B."/>
            <person name="DeBoy R.T."/>
            <person name="Dodson R.J."/>
            <person name="Durkin A.S."/>
            <person name="Gwinn M.L."/>
            <person name="Haft D.H."/>
            <person name="Kolonay J.F."/>
            <person name="Smit J."/>
            <person name="Craven M.B."/>
            <person name="Khouri H.M."/>
            <person name="Shetty J."/>
            <person name="Berry K.J."/>
            <person name="Utterback T.R."/>
            <person name="Tran K."/>
            <person name="Wolf A.M."/>
            <person name="Vamathevan J.J."/>
            <person name="Ermolaeva M.D."/>
            <person name="White O."/>
            <person name="Salzberg S.L."/>
            <person name="Venter J.C."/>
            <person name="Shapiro L."/>
            <person name="Fraser C.M."/>
        </authorList>
    </citation>
    <scope>NUCLEOTIDE SEQUENCE [LARGE SCALE GENOMIC DNA]</scope>
    <source>
        <strain>ATCC 19089 / CIP 103742 / CB 15</strain>
    </source>
</reference>
<sequence length="285" mass="30052">MTSPIIVRTVAEMREHVRAWKAAGQRVAVVPTMGALHEGHLSLVRLAQQHAERVIATVFVNPKQFAPHEDFDAYPRGEAADAEKLALVGCDLLFAPNATEMYAPGFSTLVSVSGVSEPLEGAARPQFFGGVATVVAKLFIQSQADVAVFGEKDYQQLQVVRRMARDLDIPVEIIGAPTARAEDGLALSSRNAYLSAEERAAAVALPTAMKAAAAAVAQGGPIEDAERSAVAALQAAGFGQVDYVEIREASDLSRLGPGPIGEASGRILVAAWLGKTRLIDNMAVG</sequence>
<evidence type="ECO:0000255" key="1">
    <source>
        <dbReference type="HAMAP-Rule" id="MF_00158"/>
    </source>
</evidence>
<comment type="function">
    <text evidence="1">Catalyzes the condensation of pantoate with beta-alanine in an ATP-dependent reaction via a pantoyl-adenylate intermediate.</text>
</comment>
<comment type="catalytic activity">
    <reaction evidence="1">
        <text>(R)-pantoate + beta-alanine + ATP = (R)-pantothenate + AMP + diphosphate + H(+)</text>
        <dbReference type="Rhea" id="RHEA:10912"/>
        <dbReference type="ChEBI" id="CHEBI:15378"/>
        <dbReference type="ChEBI" id="CHEBI:15980"/>
        <dbReference type="ChEBI" id="CHEBI:29032"/>
        <dbReference type="ChEBI" id="CHEBI:30616"/>
        <dbReference type="ChEBI" id="CHEBI:33019"/>
        <dbReference type="ChEBI" id="CHEBI:57966"/>
        <dbReference type="ChEBI" id="CHEBI:456215"/>
        <dbReference type="EC" id="6.3.2.1"/>
    </reaction>
</comment>
<comment type="pathway">
    <text evidence="1">Cofactor biosynthesis; (R)-pantothenate biosynthesis; (R)-pantothenate from (R)-pantoate and beta-alanine: step 1/1.</text>
</comment>
<comment type="subunit">
    <text evidence="1">Homodimer.</text>
</comment>
<comment type="subcellular location">
    <subcellularLocation>
        <location evidence="1">Cytoplasm</location>
    </subcellularLocation>
</comment>
<comment type="miscellaneous">
    <text evidence="1">The reaction proceeds by a bi uni uni bi ping pong mechanism.</text>
</comment>
<comment type="similarity">
    <text evidence="1">Belongs to the pantothenate synthetase family.</text>
</comment>
<name>PANC_CAUVC</name>